<reference key="1">
    <citation type="submission" date="2005-07" db="EMBL/GenBank/DDBJ databases">
        <title>Complete sequence of Synechococcus sp. CC9605.</title>
        <authorList>
            <consortium name="US DOE Joint Genome Institute"/>
            <person name="Copeland A."/>
            <person name="Lucas S."/>
            <person name="Lapidus A."/>
            <person name="Barry K."/>
            <person name="Detter J.C."/>
            <person name="Glavina T."/>
            <person name="Hammon N."/>
            <person name="Israni S."/>
            <person name="Pitluck S."/>
            <person name="Schmutz J."/>
            <person name="Martinez M."/>
            <person name="Larimer F."/>
            <person name="Land M."/>
            <person name="Kyrpides N."/>
            <person name="Ivanova N."/>
            <person name="Richardson P."/>
        </authorList>
    </citation>
    <scope>NUCLEOTIDE SEQUENCE [LARGE SCALE GENOMIC DNA]</scope>
    <source>
        <strain>CC9605</strain>
    </source>
</reference>
<comment type="function">
    <text evidence="1">Catalyzes the interconversion of methylthioribose-1-phosphate (MTR-1-P) into methylthioribulose-1-phosphate (MTRu-1-P).</text>
</comment>
<comment type="catalytic activity">
    <reaction evidence="1">
        <text>5-(methylsulfanyl)-alpha-D-ribose 1-phosphate = 5-(methylsulfanyl)-D-ribulose 1-phosphate</text>
        <dbReference type="Rhea" id="RHEA:19989"/>
        <dbReference type="ChEBI" id="CHEBI:58533"/>
        <dbReference type="ChEBI" id="CHEBI:58548"/>
        <dbReference type="EC" id="5.3.1.23"/>
    </reaction>
</comment>
<comment type="pathway">
    <text evidence="1">Amino-acid biosynthesis; L-methionine biosynthesis via salvage pathway; L-methionine from S-methyl-5-thio-alpha-D-ribose 1-phosphate: step 1/6.</text>
</comment>
<comment type="similarity">
    <text evidence="2">Belongs to the eIF-2B alpha/beta/delta subunits family. MtnA subfamily.</text>
</comment>
<name>MTNA_SYNSC</name>
<organism>
    <name type="scientific">Synechococcus sp. (strain CC9605)</name>
    <dbReference type="NCBI Taxonomy" id="110662"/>
    <lineage>
        <taxon>Bacteria</taxon>
        <taxon>Bacillati</taxon>
        <taxon>Cyanobacteriota</taxon>
        <taxon>Cyanophyceae</taxon>
        <taxon>Synechococcales</taxon>
        <taxon>Synechococcaceae</taxon>
        <taxon>Synechococcus</taxon>
    </lineage>
</organism>
<evidence type="ECO:0000255" key="1">
    <source>
        <dbReference type="HAMAP-Rule" id="MF_01678"/>
    </source>
</evidence>
<evidence type="ECO:0000305" key="2"/>
<sequence>MTLPPSCRWSGDHLELLDQRQLPGAVVFMQLRRWQQVAEAISSMAVRGAPAIGIAAAWGVVLAARSGDDLLTAFRGLRASRPTAVNLRWALNRMQAAMGSSASVDVEALTDAAAALQREDCVLTQRLVDHGVSLLAQGCRVLHHCHTGAIATGGVGTALGVIAAAHARGLLRHAWLDETRPRLQGAALSAWELGCLGVPCTVIVDGASGLLMRRGEVDAVMVGCDRVSANGDVANKIGTYNLALVARAHGIPFYVCAPGSSIDRATVDGEAITIEERDAEEITHVRGMDVAAPGAQVWNPAFDITPAHLVTGFITEFGVLRPPYREVLSELPLPNQL</sequence>
<proteinExistence type="inferred from homology"/>
<accession>Q3AMB7</accession>
<protein>
    <recommendedName>
        <fullName evidence="1">Methylthioribose-1-phosphate isomerase</fullName>
        <shortName evidence="1">M1Pi</shortName>
        <shortName evidence="1">MTR-1-P isomerase</shortName>
        <ecNumber evidence="1">5.3.1.23</ecNumber>
    </recommendedName>
    <alternativeName>
        <fullName evidence="1">S-methyl-5-thioribose-1-phosphate isomerase</fullName>
    </alternativeName>
</protein>
<gene>
    <name evidence="1" type="primary">mtnA</name>
    <name type="ordered locus">Syncc9605_0491</name>
</gene>
<keyword id="KW-0028">Amino-acid biosynthesis</keyword>
<keyword id="KW-0413">Isomerase</keyword>
<keyword id="KW-0486">Methionine biosynthesis</keyword>
<feature type="chain" id="PRO_0000357250" description="Methylthioribose-1-phosphate isomerase">
    <location>
        <begin position="1"/>
        <end position="337"/>
    </location>
</feature>
<feature type="active site" description="Proton donor" evidence="1">
    <location>
        <position position="225"/>
    </location>
</feature>
<feature type="binding site" evidence="1">
    <location>
        <begin position="47"/>
        <end position="49"/>
    </location>
    <ligand>
        <name>substrate</name>
    </ligand>
</feature>
<feature type="binding site" evidence="1">
    <location>
        <position position="81"/>
    </location>
    <ligand>
        <name>substrate</name>
    </ligand>
</feature>
<feature type="binding site" evidence="1">
    <location>
        <position position="184"/>
    </location>
    <ligand>
        <name>substrate</name>
    </ligand>
</feature>
<feature type="binding site" evidence="1">
    <location>
        <begin position="235"/>
        <end position="236"/>
    </location>
    <ligand>
        <name>substrate</name>
    </ligand>
</feature>
<feature type="site" description="Transition state stabilizer" evidence="1">
    <location>
        <position position="145"/>
    </location>
</feature>
<dbReference type="EC" id="5.3.1.23" evidence="1"/>
<dbReference type="EMBL" id="CP000110">
    <property type="protein sequence ID" value="ABB34265.1"/>
    <property type="molecule type" value="Genomic_DNA"/>
</dbReference>
<dbReference type="RefSeq" id="WP_011363498.1">
    <property type="nucleotide sequence ID" value="NC_007516.1"/>
</dbReference>
<dbReference type="SMR" id="Q3AMB7"/>
<dbReference type="STRING" id="110662.Syncc9605_0491"/>
<dbReference type="KEGG" id="syd:Syncc9605_0491"/>
<dbReference type="eggNOG" id="COG0182">
    <property type="taxonomic scope" value="Bacteria"/>
</dbReference>
<dbReference type="HOGENOM" id="CLU_016218_1_2_3"/>
<dbReference type="OrthoDB" id="9803436at2"/>
<dbReference type="UniPathway" id="UPA00904">
    <property type="reaction ID" value="UER00874"/>
</dbReference>
<dbReference type="GO" id="GO:0046523">
    <property type="term" value="F:S-methyl-5-thioribose-1-phosphate isomerase activity"/>
    <property type="evidence" value="ECO:0007669"/>
    <property type="project" value="UniProtKB-UniRule"/>
</dbReference>
<dbReference type="GO" id="GO:0019509">
    <property type="term" value="P:L-methionine salvage from methylthioadenosine"/>
    <property type="evidence" value="ECO:0007669"/>
    <property type="project" value="UniProtKB-UniRule"/>
</dbReference>
<dbReference type="FunFam" id="3.40.50.10470:FF:000006">
    <property type="entry name" value="Methylthioribose-1-phosphate isomerase"/>
    <property type="match status" value="1"/>
</dbReference>
<dbReference type="Gene3D" id="1.20.120.420">
    <property type="entry name" value="translation initiation factor eif-2b, domain 1"/>
    <property type="match status" value="1"/>
</dbReference>
<dbReference type="Gene3D" id="3.40.50.10470">
    <property type="entry name" value="Translation initiation factor eif-2b, domain 2"/>
    <property type="match status" value="1"/>
</dbReference>
<dbReference type="HAMAP" id="MF_01678">
    <property type="entry name" value="Salvage_MtnA"/>
    <property type="match status" value="1"/>
</dbReference>
<dbReference type="InterPro" id="IPR000649">
    <property type="entry name" value="IF-2B-related"/>
</dbReference>
<dbReference type="InterPro" id="IPR005251">
    <property type="entry name" value="IF-M1Pi"/>
</dbReference>
<dbReference type="InterPro" id="IPR042529">
    <property type="entry name" value="IF_2B-like_C"/>
</dbReference>
<dbReference type="InterPro" id="IPR011559">
    <property type="entry name" value="Initiation_fac_2B_a/b/d"/>
</dbReference>
<dbReference type="InterPro" id="IPR027363">
    <property type="entry name" value="M1Pi_N"/>
</dbReference>
<dbReference type="InterPro" id="IPR037171">
    <property type="entry name" value="NagB/RpiA_transferase-like"/>
</dbReference>
<dbReference type="NCBIfam" id="TIGR00524">
    <property type="entry name" value="eIF-2B_rel"/>
    <property type="match status" value="1"/>
</dbReference>
<dbReference type="NCBIfam" id="NF004326">
    <property type="entry name" value="PRK05720.1"/>
    <property type="match status" value="1"/>
</dbReference>
<dbReference type="NCBIfam" id="TIGR00512">
    <property type="entry name" value="salvage_mtnA"/>
    <property type="match status" value="1"/>
</dbReference>
<dbReference type="PANTHER" id="PTHR43475">
    <property type="entry name" value="METHYLTHIORIBOSE-1-PHOSPHATE ISOMERASE"/>
    <property type="match status" value="1"/>
</dbReference>
<dbReference type="PANTHER" id="PTHR43475:SF1">
    <property type="entry name" value="METHYLTHIORIBOSE-1-PHOSPHATE ISOMERASE"/>
    <property type="match status" value="1"/>
</dbReference>
<dbReference type="Pfam" id="PF01008">
    <property type="entry name" value="IF-2B"/>
    <property type="match status" value="1"/>
</dbReference>
<dbReference type="SUPFAM" id="SSF100950">
    <property type="entry name" value="NagB/RpiA/CoA transferase-like"/>
    <property type="match status" value="1"/>
</dbReference>